<gene>
    <name evidence="1" type="primary">trhO</name>
    <name type="ordered locus">LMHCC_1185</name>
</gene>
<comment type="function">
    <text evidence="1">Catalyzes oxygen-dependent 5-hydroxyuridine (ho5U) modification at position 34 in tRNAs.</text>
</comment>
<comment type="catalytic activity">
    <reaction evidence="1">
        <text>uridine(34) in tRNA + AH2 + O2 = 5-hydroxyuridine(34) in tRNA + A + H2O</text>
        <dbReference type="Rhea" id="RHEA:64224"/>
        <dbReference type="Rhea" id="RHEA-COMP:11727"/>
        <dbReference type="Rhea" id="RHEA-COMP:13381"/>
        <dbReference type="ChEBI" id="CHEBI:13193"/>
        <dbReference type="ChEBI" id="CHEBI:15377"/>
        <dbReference type="ChEBI" id="CHEBI:15379"/>
        <dbReference type="ChEBI" id="CHEBI:17499"/>
        <dbReference type="ChEBI" id="CHEBI:65315"/>
        <dbReference type="ChEBI" id="CHEBI:136877"/>
    </reaction>
</comment>
<comment type="similarity">
    <text evidence="1">Belongs to the TrhO family.</text>
</comment>
<sequence>MSDYQVLLYYKYTTIDDPETFAKEHLAACKEMELKGRILVATEGINGTVSGTVEATNKYMDYMANDARFADMVFKIDAADAHAFKKMHVRPRAEIVSLSLEEDVNPLEVTGTYLEPSEFREALLDEDTVILDARNDYEFDIGHFRGAVRPDIQNFRELPGWIEDNREQLADKKIVTYCTGGIRCEKFSGWLKTAGFDDVSQLHGGIATYGKNEETKGELWDGQMYVFDERIAVPINQVNPTIVGKDYFDGTPCERYINCANPYCNKQILASVENEKKYLRSCSHDCRVHPANLYTKNLSKEEFTERLQAIDETLPEMVQ</sequence>
<dbReference type="EC" id="1.14.-.-"/>
<dbReference type="EMBL" id="CP001175">
    <property type="protein sequence ID" value="ACK39533.1"/>
    <property type="molecule type" value="Genomic_DNA"/>
</dbReference>
<dbReference type="RefSeq" id="WP_012581350.1">
    <property type="nucleotide sequence ID" value="NC_011660.1"/>
</dbReference>
<dbReference type="SMR" id="B8DFU3"/>
<dbReference type="KEGG" id="lmh:LMHCC_1185"/>
<dbReference type="HOGENOM" id="CLU_038878_1_0_9"/>
<dbReference type="GO" id="GO:0016705">
    <property type="term" value="F:oxidoreductase activity, acting on paired donors, with incorporation or reduction of molecular oxygen"/>
    <property type="evidence" value="ECO:0007669"/>
    <property type="project" value="UniProtKB-UniRule"/>
</dbReference>
<dbReference type="GO" id="GO:0006400">
    <property type="term" value="P:tRNA modification"/>
    <property type="evidence" value="ECO:0007669"/>
    <property type="project" value="UniProtKB-UniRule"/>
</dbReference>
<dbReference type="CDD" id="cd01518">
    <property type="entry name" value="RHOD_YceA"/>
    <property type="match status" value="1"/>
</dbReference>
<dbReference type="Gene3D" id="3.30.70.100">
    <property type="match status" value="1"/>
</dbReference>
<dbReference type="Gene3D" id="3.40.250.10">
    <property type="entry name" value="Rhodanese-like domain"/>
    <property type="match status" value="1"/>
</dbReference>
<dbReference type="HAMAP" id="MF_00469">
    <property type="entry name" value="TrhO"/>
    <property type="match status" value="1"/>
</dbReference>
<dbReference type="InterPro" id="IPR001763">
    <property type="entry name" value="Rhodanese-like_dom"/>
</dbReference>
<dbReference type="InterPro" id="IPR036873">
    <property type="entry name" value="Rhodanese-like_dom_sf"/>
</dbReference>
<dbReference type="InterPro" id="IPR022111">
    <property type="entry name" value="Rhodanese_C"/>
</dbReference>
<dbReference type="InterPro" id="IPR020936">
    <property type="entry name" value="TrhO"/>
</dbReference>
<dbReference type="InterPro" id="IPR040503">
    <property type="entry name" value="TRHO_N"/>
</dbReference>
<dbReference type="NCBIfam" id="NF001135">
    <property type="entry name" value="PRK00142.1-3"/>
    <property type="match status" value="1"/>
</dbReference>
<dbReference type="PANTHER" id="PTHR43268:SF3">
    <property type="entry name" value="RHODANESE-LIKE DOMAIN-CONTAINING PROTEIN 7-RELATED"/>
    <property type="match status" value="1"/>
</dbReference>
<dbReference type="PANTHER" id="PTHR43268">
    <property type="entry name" value="THIOSULFATE SULFURTRANSFERASE/RHODANESE-LIKE DOMAIN-CONTAINING PROTEIN 2"/>
    <property type="match status" value="1"/>
</dbReference>
<dbReference type="Pfam" id="PF00581">
    <property type="entry name" value="Rhodanese"/>
    <property type="match status" value="1"/>
</dbReference>
<dbReference type="Pfam" id="PF12368">
    <property type="entry name" value="Rhodanese_C"/>
    <property type="match status" value="1"/>
</dbReference>
<dbReference type="Pfam" id="PF17773">
    <property type="entry name" value="UPF0176_N"/>
    <property type="match status" value="1"/>
</dbReference>
<dbReference type="SMART" id="SM00450">
    <property type="entry name" value="RHOD"/>
    <property type="match status" value="1"/>
</dbReference>
<dbReference type="SUPFAM" id="SSF52821">
    <property type="entry name" value="Rhodanese/Cell cycle control phosphatase"/>
    <property type="match status" value="1"/>
</dbReference>
<dbReference type="PROSITE" id="PS50206">
    <property type="entry name" value="RHODANESE_3"/>
    <property type="match status" value="1"/>
</dbReference>
<proteinExistence type="inferred from homology"/>
<keyword id="KW-0560">Oxidoreductase</keyword>
<keyword id="KW-0819">tRNA processing</keyword>
<reference key="1">
    <citation type="journal article" date="2011" name="J. Bacteriol.">
        <title>Genome sequence of lineage III Listeria monocytogenes strain HCC23.</title>
        <authorList>
            <person name="Steele C.L."/>
            <person name="Donaldson J.R."/>
            <person name="Paul D."/>
            <person name="Banes M.M."/>
            <person name="Arick T."/>
            <person name="Bridges S.M."/>
            <person name="Lawrence M.L."/>
        </authorList>
    </citation>
    <scope>NUCLEOTIDE SEQUENCE [LARGE SCALE GENOMIC DNA]</scope>
    <source>
        <strain>HCC23</strain>
    </source>
</reference>
<evidence type="ECO:0000255" key="1">
    <source>
        <dbReference type="HAMAP-Rule" id="MF_00469"/>
    </source>
</evidence>
<protein>
    <recommendedName>
        <fullName>tRNA uridine(34) hydroxylase</fullName>
        <ecNumber>1.14.-.-</ecNumber>
    </recommendedName>
    <alternativeName>
        <fullName evidence="1">UPF0176 protein LMHCC_1185</fullName>
    </alternativeName>
    <alternativeName>
        <fullName>tRNA hydroxylation protein O</fullName>
    </alternativeName>
</protein>
<name>TRHO_LISMH</name>
<accession>B8DFU3</accession>
<organism>
    <name type="scientific">Listeria monocytogenes serotype 4a (strain HCC23)</name>
    <dbReference type="NCBI Taxonomy" id="552536"/>
    <lineage>
        <taxon>Bacteria</taxon>
        <taxon>Bacillati</taxon>
        <taxon>Bacillota</taxon>
        <taxon>Bacilli</taxon>
        <taxon>Bacillales</taxon>
        <taxon>Listeriaceae</taxon>
        <taxon>Listeria</taxon>
    </lineage>
</organism>
<feature type="chain" id="PRO_1000135472" description="tRNA uridine(34) hydroxylase">
    <location>
        <begin position="1"/>
        <end position="319"/>
    </location>
</feature>
<feature type="domain" description="Rhodanese" evidence="1">
    <location>
        <begin position="124"/>
        <end position="218"/>
    </location>
</feature>
<feature type="active site" description="Cysteine persulfide intermediate" evidence="1">
    <location>
        <position position="178"/>
    </location>
</feature>